<protein>
    <recommendedName>
        <fullName>Putative F-box protein At3g25460</fullName>
    </recommendedName>
</protein>
<organism>
    <name type="scientific">Arabidopsis thaliana</name>
    <name type="common">Mouse-ear cress</name>
    <dbReference type="NCBI Taxonomy" id="3702"/>
    <lineage>
        <taxon>Eukaryota</taxon>
        <taxon>Viridiplantae</taxon>
        <taxon>Streptophyta</taxon>
        <taxon>Embryophyta</taxon>
        <taxon>Tracheophyta</taxon>
        <taxon>Spermatophyta</taxon>
        <taxon>Magnoliopsida</taxon>
        <taxon>eudicotyledons</taxon>
        <taxon>Gunneridae</taxon>
        <taxon>Pentapetalae</taxon>
        <taxon>rosids</taxon>
        <taxon>malvids</taxon>
        <taxon>Brassicales</taxon>
        <taxon>Brassicaceae</taxon>
        <taxon>Camelineae</taxon>
        <taxon>Arabidopsis</taxon>
    </lineage>
</organism>
<reference key="1">
    <citation type="journal article" date="2000" name="DNA Res.">
        <title>Structural analysis of Arabidopsis thaliana chromosome 3. I. Sequence features of the regions of 4,504,864 bp covered by sixty P1 and TAC clones.</title>
        <authorList>
            <person name="Sato S."/>
            <person name="Nakamura Y."/>
            <person name="Kaneko T."/>
            <person name="Katoh T."/>
            <person name="Asamizu E."/>
            <person name="Tabata S."/>
        </authorList>
    </citation>
    <scope>NUCLEOTIDE SEQUENCE [LARGE SCALE GENOMIC DNA]</scope>
    <source>
        <strain>cv. Columbia</strain>
    </source>
</reference>
<reference key="2">
    <citation type="journal article" date="2017" name="Plant J.">
        <title>Araport11: a complete reannotation of the Arabidopsis thaliana reference genome.</title>
        <authorList>
            <person name="Cheng C.Y."/>
            <person name="Krishnakumar V."/>
            <person name="Chan A.P."/>
            <person name="Thibaud-Nissen F."/>
            <person name="Schobel S."/>
            <person name="Town C.D."/>
        </authorList>
    </citation>
    <scope>GENOME REANNOTATION</scope>
    <source>
        <strain>cv. Columbia</strain>
    </source>
</reference>
<dbReference type="EMBL" id="AB025639">
    <property type="protein sequence ID" value="BAB01315.1"/>
    <property type="molecule type" value="Genomic_DNA"/>
</dbReference>
<dbReference type="EMBL" id="CP002686">
    <property type="protein sequence ID" value="AEE77013.1"/>
    <property type="molecule type" value="Genomic_DNA"/>
</dbReference>
<dbReference type="RefSeq" id="NP_189173.1">
    <property type="nucleotide sequence ID" value="NM_113442.1"/>
</dbReference>
<dbReference type="SMR" id="Q9LSV6"/>
<dbReference type="FunCoup" id="Q9LSV6">
    <property type="interactions" value="8"/>
</dbReference>
<dbReference type="STRING" id="3702.Q9LSV6"/>
<dbReference type="PaxDb" id="3702-AT3G25460.1"/>
<dbReference type="EnsemblPlants" id="AT3G25460.1">
    <property type="protein sequence ID" value="AT3G25460.1"/>
    <property type="gene ID" value="AT3G25460"/>
</dbReference>
<dbReference type="GeneID" id="822130"/>
<dbReference type="Gramene" id="AT3G25460.1">
    <property type="protein sequence ID" value="AT3G25460.1"/>
    <property type="gene ID" value="AT3G25460"/>
</dbReference>
<dbReference type="KEGG" id="ath:AT3G25460"/>
<dbReference type="Araport" id="AT3G25460"/>
<dbReference type="TAIR" id="AT3G25460"/>
<dbReference type="HOGENOM" id="CLU_034692_1_2_1"/>
<dbReference type="InParanoid" id="Q9LSV6"/>
<dbReference type="OMA" id="YHCISFL"/>
<dbReference type="PhylomeDB" id="Q9LSV6"/>
<dbReference type="PRO" id="PR:Q9LSV6"/>
<dbReference type="Proteomes" id="UP000006548">
    <property type="component" value="Chromosome 3"/>
</dbReference>
<dbReference type="CDD" id="cd22157">
    <property type="entry name" value="F-box_AtFBW1-like"/>
    <property type="match status" value="1"/>
</dbReference>
<dbReference type="Gene3D" id="1.20.1280.50">
    <property type="match status" value="1"/>
</dbReference>
<dbReference type="InterPro" id="IPR006527">
    <property type="entry name" value="F-box-assoc_dom_typ1"/>
</dbReference>
<dbReference type="InterPro" id="IPR017451">
    <property type="entry name" value="F-box-assoc_interact_dom"/>
</dbReference>
<dbReference type="InterPro" id="IPR036047">
    <property type="entry name" value="F-box-like_dom_sf"/>
</dbReference>
<dbReference type="InterPro" id="IPR001810">
    <property type="entry name" value="F-box_dom"/>
</dbReference>
<dbReference type="InterPro" id="IPR011043">
    <property type="entry name" value="Gal_Oxase/kelch_b-propeller"/>
</dbReference>
<dbReference type="InterPro" id="IPR050796">
    <property type="entry name" value="SCF_F-box_component"/>
</dbReference>
<dbReference type="NCBIfam" id="TIGR01640">
    <property type="entry name" value="F_box_assoc_1"/>
    <property type="match status" value="1"/>
</dbReference>
<dbReference type="PANTHER" id="PTHR31672">
    <property type="entry name" value="BNACNNG10540D PROTEIN"/>
    <property type="match status" value="1"/>
</dbReference>
<dbReference type="PANTHER" id="PTHR31672:SF13">
    <property type="entry name" value="F-BOX PROTEIN CPR30-LIKE"/>
    <property type="match status" value="1"/>
</dbReference>
<dbReference type="Pfam" id="PF00646">
    <property type="entry name" value="F-box"/>
    <property type="match status" value="1"/>
</dbReference>
<dbReference type="Pfam" id="PF07734">
    <property type="entry name" value="FBA_1"/>
    <property type="match status" value="1"/>
</dbReference>
<dbReference type="SMART" id="SM00256">
    <property type="entry name" value="FBOX"/>
    <property type="match status" value="1"/>
</dbReference>
<dbReference type="SUPFAM" id="SSF81383">
    <property type="entry name" value="F-box domain"/>
    <property type="match status" value="1"/>
</dbReference>
<dbReference type="SUPFAM" id="SSF50965">
    <property type="entry name" value="Galactose oxidase, central domain"/>
    <property type="match status" value="1"/>
</dbReference>
<dbReference type="PROSITE" id="PS50181">
    <property type="entry name" value="FBOX"/>
    <property type="match status" value="1"/>
</dbReference>
<evidence type="ECO:0000255" key="1">
    <source>
        <dbReference type="PROSITE-ProRule" id="PRU00080"/>
    </source>
</evidence>
<name>FB186_ARATH</name>
<feature type="chain" id="PRO_0000283456" description="Putative F-box protein At3g25460">
    <location>
        <begin position="1"/>
        <end position="361"/>
    </location>
</feature>
<feature type="domain" description="F-box" evidence="1">
    <location>
        <begin position="1"/>
        <end position="45"/>
    </location>
</feature>
<proteinExistence type="predicted"/>
<accession>Q9LSV6</accession>
<sequence>MMMPELPEDLLVEILCRVPATSLKRLRSTCKLWNHLYNDKRFKSKHCHKAPRQSLILMWKNFGFSSISINLQRVSPIEVTGELNLIDHHSSLGMFRNSPLCQTSGLLLCVNVEKINTRLVVWNPCTGKTKWIQHRRMGYICNYALGSYQDKKSDNNSYKILSHGIYGGQEFEIYEINSNSWRILDVTVDSSLYIENVSLKGKTYWFATDGNDKPCDLFLICFDYTTERFERLCLPYQIPYFRNTSLSVVKEEKLSVLLQPSLTSKTQIWVTNKIGEAKVLSWIKFLTVDLKPEIKYGIKFLVDEENKVLVYEQNFVINGKNNMIYVVGEDNEVREVVFRVGLKPLFFYYVPSLTQIRQGND</sequence>
<gene>
    <name type="ordered locus">At3g25460</name>
    <name type="ORF">MWL2.7</name>
</gene>
<keyword id="KW-1185">Reference proteome</keyword>